<reference key="1">
    <citation type="journal article" date="2002" name="Appl. Environ. Microbiol.">
        <title>Cloning and characterization of a gene cluster involved in cyclopentanol metabolism in Comamonas sp. strain NCIMB 9872 and biotransformations effected by Escherichia coli-expressed cyclopentanone 1,2-monooxygenase.</title>
        <authorList>
            <person name="Iwaki H."/>
            <person name="Hasegawa Y."/>
            <person name="Wang S."/>
            <person name="Kayser M.M."/>
            <person name="Lau P.C.K."/>
        </authorList>
    </citation>
    <scope>NUCLEOTIDE SEQUENCE [GENOMIC DNA]</scope>
    <scope>PROTEIN SEQUENCE OF 2-41</scope>
    <scope>FUNCTION</scope>
    <scope>CATALYTIC ACTIVITY</scope>
    <scope>SUBSTRATE SPECIFICITY</scope>
    <scope>COFACTOR</scope>
    <scope>DISRUPTION PHENOTYPE</scope>
    <scope>PATHWAY</scope>
    <source>
        <strain>NCIMB 9872</strain>
    </source>
</reference>
<reference key="2">
    <citation type="journal article" date="2003" name="Appl. Environ. Microbiol.">
        <authorList>
            <person name="Iwaki H."/>
            <person name="Hasegawa Y."/>
            <person name="Wang S."/>
            <person name="Kayser M.M."/>
            <person name="Lau P.C.K."/>
        </authorList>
    </citation>
    <scope>ERRATUM OF PUBMED:12406764</scope>
</reference>
<reference key="3">
    <citation type="journal article" date="2003" name="Environ. Microbiol.">
        <title>Cloning of Baeyer-Villiger monooxygenases from Comamonas, Xanthobacter and Rhodococcus via PCR with highly degenerate primers.</title>
        <authorList>
            <person name="van Beilen J.B."/>
            <person name="Mourlane F."/>
            <person name="Seeger M.A."/>
            <person name="Kovac J."/>
            <person name="Li Z."/>
            <person name="Smits T.H.M."/>
            <person name="Fritsche U."/>
            <person name="Witholt B."/>
        </authorList>
    </citation>
    <scope>NUCLEOTIDE SEQUENCE [GENOMIC DNA]</scope>
    <scope>FUNCTION</scope>
    <source>
        <strain>NCIMB 9872</strain>
    </source>
</reference>
<reference key="4">
    <citation type="journal article" date="1996" name="J. Mol. Catal., B Enzym.">
        <title>Oxidative biotransformations by microorganisms: production of chiral synthons by cyclopentanone monooxygenase from Pseudomonas sp. NCIMB 9872.</title>
        <authorList>
            <person name="Bes M.T."/>
            <person name="Villa R."/>
            <person name="Roberts S.M."/>
            <person name="Wan P.W.H."/>
            <person name="Willetts A."/>
        </authorList>
    </citation>
    <scope>PROTEIN SEQUENCE OF 2-30</scope>
    <scope>SUBUNIT</scope>
    <scope>CHARACTERIZATION</scope>
    <source>
        <strain>NCIMB 9872</strain>
    </source>
</reference>
<reference key="5">
    <citation type="journal article" date="2014" name="Chem. Commun. (Camb.)">
        <title>Broadening the scope of Baeyer-Villiger monooxygenase activities toward alpha,beta-unsaturated ketones: a promising route to chiral enol-lactones and ene-lactones.</title>
        <authorList>
            <person name="Reignier T."/>
            <person name="de Berardinis V."/>
            <person name="Petit J.L."/>
            <person name="Mariage A."/>
            <person name="Hamze K."/>
            <person name="Duquesne K."/>
            <person name="Alphand V."/>
        </authorList>
    </citation>
    <scope>FUNCTION</scope>
    <scope>CATALYTIC ACTIVITY</scope>
    <scope>SUBSTRATE SPECIFICITY</scope>
    <scope>COFACTOR</scope>
    <source>
        <strain>NCIMB 9872</strain>
    </source>
</reference>
<gene>
    <name type="primary">cpnB</name>
    <name type="synonym">cpmA</name>
</gene>
<keyword id="KW-0903">Direct protein sequencing</keyword>
<keyword id="KW-0274">FAD</keyword>
<keyword id="KW-0285">Flavoprotein</keyword>
<keyword id="KW-0503">Monooxygenase</keyword>
<keyword id="KW-0521">NADP</keyword>
<keyword id="KW-0560">Oxidoreductase</keyword>
<accession>Q8GAW0</accession>
<accession>Q937L5</accession>
<protein>
    <recommendedName>
        <fullName>Cyclopentanone 1,2-monooxygenase</fullName>
        <shortName>CPMO</shortName>
        <ecNumber>1.14.13.16</ecNumber>
    </recommendedName>
    <alternativeName>
        <fullName>Baeyer-Villiger monooxygenase</fullName>
        <shortName>BVMO</shortName>
    </alternativeName>
</protein>
<sequence length="550" mass="62111">MTTMTTMTTEQLGMNNSVNDKLDVLLIGAGFTGLYQLYHLRKLGYKVHLVDAGADIGGIWHWNCYPGARVDTHCQIYQYSIPELWQEFNWKELFPNWAQMREYFHFADKKLDLSKDISFNTRVQSAVFDEGTREWTVRSIGHQPIQARFVIANLGFGASPSTPNVDGIETFKGQWYHTALWPQEGVNMAGKRVAIIGTGSSGVQVAQEAALDAKQVTVYQRTPNLALPMHQKQLSAEDNLRMKPELPAAFERRGKCFAGFDFDFIAKNATELSAAERTEILEELWNAGGFRYWLANFQDYLFDDKANDYVYEFWRDKVRARIKDPKVAEKLAPMKKPHPYGAKRPSLEQWYYEIFNQNNVTLVDVNETPVLRITEKGIVTAEGEAEFDLIVFATGFDAVTGGLTSIDFRNNQGQSFKDVWSDGIRTQLGVATAGFPNLLFGYGPQSPAGFCNGPSSAEYQGDLLIQLMNYLRDNNISRIEAQSEAQEEWSKLIADFWDSSLFPRAKSWYQGSNIPGKKVESLNFPLGLPTYISKFNESAEKGYAGFSLAS</sequence>
<evidence type="ECO:0000250" key="1"/>
<evidence type="ECO:0000255" key="2"/>
<evidence type="ECO:0000269" key="3">
    <source>
    </source>
</evidence>
<evidence type="ECO:0000269" key="4">
    <source>
    </source>
</evidence>
<evidence type="ECO:0000269" key="5">
    <source>
    </source>
</evidence>
<evidence type="ECO:0000269" key="6">
    <source ref="4"/>
</evidence>
<evidence type="ECO:0000305" key="7"/>
<proteinExistence type="evidence at protein level"/>
<organism>
    <name type="scientific">Comamonas sp. (strain NCIMB 9872)</name>
    <dbReference type="NCBI Taxonomy" id="213664"/>
    <lineage>
        <taxon>Bacteria</taxon>
        <taxon>Pseudomonadati</taxon>
        <taxon>Pseudomonadota</taxon>
        <taxon>Betaproteobacteria</taxon>
        <taxon>Burkholderiales</taxon>
        <taxon>Comamonadaceae</taxon>
        <taxon>Comamonas</taxon>
    </lineage>
</organism>
<comment type="function">
    <text evidence="3 4 5">Catalyzes a Baeyer-Villiger oxidation reaction, i.e. the insertion of an oxygen atom into a carbon-carbon bond adjacent to a carbonyl, which converts ketones to esters or lactones using NADPH as an electron donor. Converts cyclopentanone to 5-valerolactone, a step in the degradation pathway of cyclopentanol. Besides cycloalkanones, can also act on methylated and other alkylated cycloalkanones, and on methylated cycloalkenones, with high enantioselectivity in some cases. Cannot use NADH instead of NADPH.</text>
</comment>
<comment type="catalytic activity">
    <reaction evidence="3 5">
        <text>cyclopentanone + NADPH + O2 + H(+) = 5-valerolactone + NADP(+) + H2O</text>
        <dbReference type="Rhea" id="RHEA:15737"/>
        <dbReference type="ChEBI" id="CHEBI:15377"/>
        <dbReference type="ChEBI" id="CHEBI:15378"/>
        <dbReference type="ChEBI" id="CHEBI:15379"/>
        <dbReference type="ChEBI" id="CHEBI:16486"/>
        <dbReference type="ChEBI" id="CHEBI:16545"/>
        <dbReference type="ChEBI" id="CHEBI:57783"/>
        <dbReference type="ChEBI" id="CHEBI:58349"/>
        <dbReference type="EC" id="1.14.13.16"/>
    </reaction>
</comment>
<comment type="cofactor">
    <cofactor evidence="3 5">
        <name>FAD</name>
        <dbReference type="ChEBI" id="CHEBI:57692"/>
    </cofactor>
</comment>
<comment type="pathway">
    <text evidence="3">Alcohol metabolism; cyclopentanol degradation; 5-valerolactone from cyclopentanol: step 2/2.</text>
</comment>
<comment type="subunit">
    <text evidence="6">Homotetramer.</text>
</comment>
<comment type="disruption phenotype">
    <text evidence="3">Cells lacking this gene are not capable of growth on cyclopentanol or cyclopentanone as a sole carbon and energy source.</text>
</comment>
<comment type="similarity">
    <text evidence="7">Belongs to the FAD-binding monooxygenase family.</text>
</comment>
<dbReference type="EC" id="1.14.13.16"/>
<dbReference type="EMBL" id="AB073151">
    <property type="protein sequence ID" value="BAC22652.1"/>
    <property type="molecule type" value="Genomic_DNA"/>
</dbReference>
<dbReference type="EMBL" id="AB022102">
    <property type="protein sequence ID" value="BAC01269.1"/>
    <property type="molecule type" value="Genomic_DNA"/>
</dbReference>
<dbReference type="EMBL" id="AJ418060">
    <property type="protein sequence ID" value="CAD10798.1"/>
    <property type="molecule type" value="Genomic_DNA"/>
</dbReference>
<dbReference type="SMR" id="Q8GAW0"/>
<dbReference type="KEGG" id="ag:BAC22652"/>
<dbReference type="BRENDA" id="1.14.13.16">
    <property type="organism ID" value="1588"/>
</dbReference>
<dbReference type="SABIO-RK" id="Q8GAW0"/>
<dbReference type="UniPathway" id="UPA00764">
    <property type="reaction ID" value="UER00750"/>
</dbReference>
<dbReference type="GO" id="GO:0047799">
    <property type="term" value="F:cyclopentanone monooxygenase activity"/>
    <property type="evidence" value="ECO:0007669"/>
    <property type="project" value="UniProtKB-EC"/>
</dbReference>
<dbReference type="GO" id="GO:0050660">
    <property type="term" value="F:flavin adenine dinucleotide binding"/>
    <property type="evidence" value="ECO:0007669"/>
    <property type="project" value="InterPro"/>
</dbReference>
<dbReference type="GO" id="GO:0004499">
    <property type="term" value="F:N,N-dimethylaniline monooxygenase activity"/>
    <property type="evidence" value="ECO:0007669"/>
    <property type="project" value="InterPro"/>
</dbReference>
<dbReference type="GO" id="GO:0050661">
    <property type="term" value="F:NADP binding"/>
    <property type="evidence" value="ECO:0007669"/>
    <property type="project" value="InterPro"/>
</dbReference>
<dbReference type="GO" id="GO:0033022">
    <property type="term" value="P:cyclopentanol catabolic process"/>
    <property type="evidence" value="ECO:0007669"/>
    <property type="project" value="UniProtKB-UniPathway"/>
</dbReference>
<dbReference type="Gene3D" id="3.50.50.60">
    <property type="entry name" value="FAD/NAD(P)-binding domain"/>
    <property type="match status" value="2"/>
</dbReference>
<dbReference type="InterPro" id="IPR050775">
    <property type="entry name" value="FAD-binding_Monooxygenases"/>
</dbReference>
<dbReference type="InterPro" id="IPR036188">
    <property type="entry name" value="FAD/NAD-bd_sf"/>
</dbReference>
<dbReference type="InterPro" id="IPR020946">
    <property type="entry name" value="Flavin_mOase-like"/>
</dbReference>
<dbReference type="PANTHER" id="PTHR43098">
    <property type="entry name" value="L-ORNITHINE N(5)-MONOOXYGENASE-RELATED"/>
    <property type="match status" value="1"/>
</dbReference>
<dbReference type="PANTHER" id="PTHR43098:SF3">
    <property type="entry name" value="L-ORNITHINE N(5)-MONOOXYGENASE-RELATED"/>
    <property type="match status" value="1"/>
</dbReference>
<dbReference type="Pfam" id="PF00743">
    <property type="entry name" value="FMO-like"/>
    <property type="match status" value="1"/>
</dbReference>
<dbReference type="SUPFAM" id="SSF51905">
    <property type="entry name" value="FAD/NAD(P)-binding domain"/>
    <property type="match status" value="2"/>
</dbReference>
<name>CPMO_COMS9</name>
<feature type="initiator methionine" description="Removed" evidence="3 6">
    <location>
        <position position="1"/>
    </location>
</feature>
<feature type="chain" id="PRO_0000186453" description="Cyclopentanone 1,2-monooxygenase">
    <location>
        <begin position="2"/>
        <end position="550"/>
    </location>
</feature>
<feature type="binding site" evidence="1">
    <location>
        <begin position="31"/>
        <end position="32"/>
    </location>
    <ligand>
        <name>FAD</name>
        <dbReference type="ChEBI" id="CHEBI:57692"/>
    </ligand>
</feature>
<feature type="binding site" evidence="1">
    <location>
        <position position="51"/>
    </location>
    <ligand>
        <name>FAD</name>
        <dbReference type="ChEBI" id="CHEBI:57692"/>
    </ligand>
</feature>
<feature type="binding site" evidence="1">
    <location>
        <position position="60"/>
    </location>
    <ligand>
        <name>FAD</name>
        <dbReference type="ChEBI" id="CHEBI:57692"/>
    </ligand>
</feature>
<feature type="binding site" evidence="1">
    <location>
        <position position="71"/>
    </location>
    <ligand>
        <name>FAD</name>
        <dbReference type="ChEBI" id="CHEBI:57692"/>
    </ligand>
</feature>
<feature type="binding site" evidence="1">
    <location>
        <position position="77"/>
    </location>
    <ligand>
        <name>FAD</name>
        <dbReference type="ChEBI" id="CHEBI:57692"/>
    </ligand>
</feature>
<feature type="binding site" evidence="1">
    <location>
        <position position="123"/>
    </location>
    <ligand>
        <name>FAD</name>
        <dbReference type="ChEBI" id="CHEBI:57692"/>
    </ligand>
</feature>
<feature type="site" description="Transition state stabilizer" evidence="2">
    <location>
        <position position="344"/>
    </location>
</feature>